<sequence>MASGSRWRPTPPPLLLLLLLALAARADGLEFGGGPGQWARYARWAGAASSGELSFSLRTNATRALLLYLDDGGDCDFLELLLVDGRLRLRFTLSCAEPATLQLDTPVADDRWHMVLLTRDARRTALAVDGEARAAEVRSKRREMQVASDLFVGGIPPDVRLSALTLSTVKYEPPFRGLLANLKLGERPPALLGSQGLRGATADPLCAPARNPCANGGLCTVLAPGEVGCDCSHTGFGGKFCSEEEHPMEGPAHLTLNSEVGSLLFSEGGAGRGGAGDVHQPTKGKEEFVATFKGNEFFCYDLSHNPIQSSTDEITLAFRTLQRNGLMLHTGKSADYVNLSLKSGAVWLVINLGSGAFEALVEPVNGKFNDNAWHDVRVTRNLRQHAGIGHAMVNKLHYLVTISVDGILTTTGYTQEDYTMLGSDDFFYIGGSPNTADLPGSPVSNNFMGCLKDVVYKNNDFKLELSRLAKEGDPKMKLQGDLSFRCEDVAALDPVTFESPEAFVALPRWSAKRTGSISLDFRTTEPNGLLLFSQGRRAGGGAGSHSSAQRADYFAMELLDGHLYLLLDMGSGGIKLRASSRKVNDGEWCHVDFQRDGRKGSISVNSRSTPFLATGDSEILDLESELYLGGLPEGGRVDLPLPPEVWTAALRAGYVGCVRDLFIDGRSRDLRGLAEAQGAVGVAPFCSRETLKQCASAPCRNGGVCREGWNRFICDCIGTGFLGRVCEREATVLSYDGSMYMKIMLPNAMHTEAEDVSLRFMSQRAYGLMMATTSRESADTLRLELDGGQMKLTVNLDCLRVGCAPSKGPETLFAGHKLNDNEWHTVRVVRRGKSLQLSVDNVTVEGQMAGAHMRLEFHNIETGIMTERRFISVVPSNFIGHLSGLVFNGQPYMDQCKDGDITYCELNARFGLRAIVADPVTFKSRSSYLALATLQAYASMHLFFQFKTTAPDGLLLFNSGNGNDFIVIELVKGYIHYVFDLGNGPSLMKGNSDKPVNDNQWHNVVVSRDPGNVHTLKIDSRTVTQHSNGARNLDLKGELYIGGLSKNMFSNLPKLVASRDGFQGCLASVDLNGRLPDLIADALHRIGQVERGCDGPSTTCTEESCANQGVCLQQWDGFTCDCTMTSYGGPVCNDPGTTYIFGKGGALITYTWPPNDRPSTRMDRLAVGFSTHQRSAVLVRVDSASGLGDYLQLHIDQGTVGVIFNVGTDDITIDEPNAIVSDGKYHVVRFTRSGGNATLQVDSWPVNERYPAGNFDNERLAIARQRIPYRLGRVVDEWLLDKGRQLTIFNSQAAIKIGGRDQGRPFQGQVSGLYYNGLKVLALAAESDPNVRTEGHLRLVGEGPSVLLSAETTATTLLADMATTIMETTTTMATTTTRRGRSPTLRDSTTQNTDDLLVASAECPSDDEDLEECEPSTGGELILPIITEDSLDPPPVATRSPFVPPPPTFYPFLTGVGATQDTLPPPAARRPPSGGPCQAERDDSDCEEPIEASGFASGEVFDSSLPPTDDEDFYTTFPLVTDRTTLLSPRKPAPRPNLRTDGATGAPGVLFAPSAPAPNLPAGKMNHRDPLQPLLENPPLGPGAPTSFEPRRPPPLRPGVTSAPGFPHLPTANPTGPGERGPPGAVEVIRESSSTTGMVVGIVAAAALCILILLYAMYKYRNRDEGSYQVDQSRNYISNSAQSNGAVVKEKAPAAPKTPSKAKKNKDKEYYV</sequence>
<name>NRX2A_HUMAN</name>
<accession>Q9P2S2</accession>
<accession>A7E2C1</accession>
<accession>Q9Y2D6</accession>
<feature type="signal peptide" evidence="7">
    <location>
        <begin position="1"/>
        <end position="28"/>
    </location>
</feature>
<feature type="chain" id="PRO_0000019495" description="Neurexin-2">
    <location>
        <begin position="29"/>
        <end position="1712"/>
    </location>
</feature>
<feature type="topological domain" description="Extracellular" evidence="7">
    <location>
        <begin position="29"/>
        <end position="1636"/>
    </location>
</feature>
<feature type="transmembrane region" description="Helical" evidence="7">
    <location>
        <begin position="1637"/>
        <end position="1657"/>
    </location>
</feature>
<feature type="topological domain" description="Cytoplasmic" evidence="7">
    <location>
        <begin position="1658"/>
        <end position="1712"/>
    </location>
</feature>
<feature type="domain" description="Laminin G-like 1" evidence="9">
    <location>
        <begin position="29"/>
        <end position="206"/>
    </location>
</feature>
<feature type="domain" description="EGF-like 1" evidence="8">
    <location>
        <begin position="202"/>
        <end position="242"/>
    </location>
</feature>
<feature type="domain" description="Laminin G-like 2" evidence="9">
    <location>
        <begin position="289"/>
        <end position="486"/>
    </location>
</feature>
<feature type="domain" description="Laminin G-like 3" evidence="9">
    <location>
        <begin position="493"/>
        <end position="686"/>
    </location>
</feature>
<feature type="domain" description="EGF-like 2" evidence="8">
    <location>
        <begin position="690"/>
        <end position="727"/>
    </location>
</feature>
<feature type="domain" description="Laminin G-like 4" evidence="9">
    <location>
        <begin position="732"/>
        <end position="904"/>
    </location>
</feature>
<feature type="domain" description="Laminin G-like 5" evidence="9">
    <location>
        <begin position="918"/>
        <end position="1093"/>
    </location>
</feature>
<feature type="domain" description="EGF-like 3" evidence="8">
    <location>
        <begin position="1096"/>
        <end position="1133"/>
    </location>
</feature>
<feature type="domain" description="Laminin G-like 6" evidence="9">
    <location>
        <begin position="1137"/>
        <end position="1345"/>
    </location>
</feature>
<feature type="region of interest" description="Disordered" evidence="10">
    <location>
        <begin position="1373"/>
        <end position="1392"/>
    </location>
</feature>
<feature type="region of interest" description="Disordered" evidence="10">
    <location>
        <begin position="1458"/>
        <end position="1489"/>
    </location>
</feature>
<feature type="region of interest" description="Disordered" evidence="10">
    <location>
        <begin position="1525"/>
        <end position="1626"/>
    </location>
</feature>
<feature type="region of interest" description="Disordered" evidence="10">
    <location>
        <begin position="1679"/>
        <end position="1712"/>
    </location>
</feature>
<feature type="binding site" evidence="3">
    <location>
        <position position="335"/>
    </location>
    <ligand>
        <name>Ca(2+)</name>
        <dbReference type="ChEBI" id="CHEBI:29108"/>
        <label>1</label>
    </ligand>
</feature>
<feature type="binding site" evidence="3">
    <location>
        <position position="352"/>
    </location>
    <ligand>
        <name>Ca(2+)</name>
        <dbReference type="ChEBI" id="CHEBI:29108"/>
        <label>1</label>
    </ligand>
</feature>
<feature type="binding site" evidence="3">
    <location>
        <position position="420"/>
    </location>
    <ligand>
        <name>Ca(2+)</name>
        <dbReference type="ChEBI" id="CHEBI:29108"/>
        <label>1</label>
    </ligand>
</feature>
<feature type="binding site" evidence="3">
    <location>
        <position position="779"/>
    </location>
    <ligand>
        <name>Ca(2+)</name>
        <dbReference type="ChEBI" id="CHEBI:29108"/>
        <label>2</label>
    </ligand>
</feature>
<feature type="binding site" evidence="3">
    <location>
        <position position="796"/>
    </location>
    <ligand>
        <name>Ca(2+)</name>
        <dbReference type="ChEBI" id="CHEBI:29108"/>
        <label>2</label>
    </ligand>
</feature>
<feature type="binding site" evidence="3">
    <location>
        <position position="854"/>
    </location>
    <ligand>
        <name>Ca(2+)</name>
        <dbReference type="ChEBI" id="CHEBI:29108"/>
        <label>2</label>
    </ligand>
</feature>
<feature type="binding site" evidence="6">
    <location>
        <position position="1189"/>
    </location>
    <ligand>
        <name>Ca(2+)</name>
        <dbReference type="ChEBI" id="CHEBI:29108"/>
        <label>3</label>
    </ligand>
</feature>
<feature type="binding site" evidence="6">
    <location>
        <position position="1206"/>
    </location>
    <ligand>
        <name>Ca(2+)</name>
        <dbReference type="ChEBI" id="CHEBI:29108"/>
        <label>3</label>
    </ligand>
</feature>
<feature type="binding site" evidence="6">
    <location>
        <position position="1288"/>
    </location>
    <ligand>
        <name>Ca(2+)</name>
        <dbReference type="ChEBI" id="CHEBI:29108"/>
        <label>3</label>
    </ligand>
</feature>
<feature type="binding site" evidence="6">
    <location>
        <position position="1290"/>
    </location>
    <ligand>
        <name>Ca(2+)</name>
        <dbReference type="ChEBI" id="CHEBI:29108"/>
        <label>3</label>
    </ligand>
</feature>
<feature type="glycosylation site" description="N-linked (GlcNAc...) asparagine" evidence="7">
    <location>
        <position position="60"/>
    </location>
</feature>
<feature type="glycosylation site" description="N-linked (GlcNAc...) asparagine" evidence="7">
    <location>
        <position position="338"/>
    </location>
</feature>
<feature type="glycosylation site" description="N-linked (GlcNAc...) asparagine" evidence="7">
    <location>
        <position position="841"/>
    </location>
</feature>
<feature type="glycosylation site" description="N-linked (GlcNAc...) asparagine" evidence="7">
    <location>
        <position position="1236"/>
    </location>
</feature>
<feature type="glycosylation site" description="O-linked (Xyl...) (heparan sulfate) serine" evidence="1">
    <location>
        <position position="1400"/>
    </location>
</feature>
<feature type="disulfide bond" evidence="8">
    <location>
        <begin position="206"/>
        <end position="219"/>
    </location>
</feature>
<feature type="disulfide bond" evidence="8">
    <location>
        <begin position="213"/>
        <end position="229"/>
    </location>
</feature>
<feature type="disulfide bond" evidence="8">
    <location>
        <begin position="231"/>
        <end position="241"/>
    </location>
</feature>
<feature type="disulfide bond" evidence="9">
    <location>
        <begin position="450"/>
        <end position="486"/>
    </location>
</feature>
<feature type="disulfide bond" evidence="9">
    <location>
        <begin position="657"/>
        <end position="686"/>
    </location>
</feature>
<feature type="disulfide bond" evidence="8">
    <location>
        <begin position="694"/>
        <end position="705"/>
    </location>
</feature>
<feature type="disulfide bond" evidence="8">
    <location>
        <begin position="699"/>
        <end position="714"/>
    </location>
</feature>
<feature type="disulfide bond" evidence="8">
    <location>
        <begin position="716"/>
        <end position="726"/>
    </location>
</feature>
<feature type="disulfide bond" evidence="9">
    <location>
        <begin position="1065"/>
        <end position="1093"/>
    </location>
</feature>
<feature type="disulfide bond" evidence="8">
    <location>
        <begin position="1100"/>
        <end position="1111"/>
    </location>
</feature>
<feature type="disulfide bond" evidence="8">
    <location>
        <begin position="1105"/>
        <end position="1120"/>
    </location>
</feature>
<feature type="disulfide bond" evidence="8">
    <location>
        <begin position="1122"/>
        <end position="1132"/>
    </location>
</feature>
<feature type="splice variant" id="VSP_003505" description="In isoform 2a." evidence="11 12">
    <location>
        <begin position="260"/>
        <end position="283"/>
    </location>
</feature>
<feature type="splice variant" id="VSP_003506" description="In isoform 2a." evidence="11 12">
    <location>
        <begin position="393"/>
        <end position="399"/>
    </location>
</feature>
<feature type="splice variant" id="VSP_003507" description="In isoform 2a." evidence="11 12">
    <original>DCLRVGCAPS</original>
    <variation>G</variation>
    <location>
        <begin position="797"/>
        <end position="806"/>
    </location>
</feature>
<feature type="splice variant" id="VSP_003508" description="In isoform 2a." evidence="11 12">
    <location>
        <begin position="1253"/>
        <end position="1282"/>
    </location>
</feature>
<feature type="sequence variant" id="VAR_050266" description="In dbSNP:rs12273892.">
    <original>L</original>
    <variation>Q</variation>
    <location>
        <position position="81"/>
    </location>
</feature>
<reference key="1">
    <citation type="submission" date="1999-11" db="EMBL/GenBank/DDBJ databases">
        <title>Human neurexin II.</title>
        <authorList>
            <person name="Seki N."/>
            <person name="Yoshikawa T."/>
            <person name="Azuma T."/>
            <person name="Muramatsu M."/>
            <person name="Saito T."/>
        </authorList>
    </citation>
    <scope>NUCLEOTIDE SEQUENCE [MRNA] (ISOFORM 1A)</scope>
    <source>
        <tissue>Fetal brain</tissue>
    </source>
</reference>
<reference key="2">
    <citation type="journal article" date="1999" name="DNA Res.">
        <title>Prediction of the coding sequences of unidentified human genes. XIII. The complete sequences of 100 new cDNA clones from brain which code for large proteins in vitro.</title>
        <authorList>
            <person name="Nagase T."/>
            <person name="Ishikawa K."/>
            <person name="Suyama M."/>
            <person name="Kikuno R."/>
            <person name="Hirosawa M."/>
            <person name="Miyajima N."/>
            <person name="Tanaka A."/>
            <person name="Kotani H."/>
            <person name="Nomura N."/>
            <person name="Ohara O."/>
        </authorList>
    </citation>
    <scope>NUCLEOTIDE SEQUENCE [LARGE SCALE MRNA] (ISOFORM 2A)</scope>
    <source>
        <tissue>Brain</tissue>
    </source>
</reference>
<reference key="3">
    <citation type="journal article" date="2002" name="DNA Res.">
        <title>Construction of expression-ready cDNA clones for KIAA genes: manual curation of 330 KIAA cDNA clones.</title>
        <authorList>
            <person name="Nakajima D."/>
            <person name="Okazaki N."/>
            <person name="Yamakawa H."/>
            <person name="Kikuno R."/>
            <person name="Ohara O."/>
            <person name="Nagase T."/>
        </authorList>
    </citation>
    <scope>SEQUENCE REVISION</scope>
</reference>
<reference key="4">
    <citation type="journal article" date="2006" name="Nature">
        <title>Human chromosome 11 DNA sequence and analysis including novel gene identification.</title>
        <authorList>
            <person name="Taylor T.D."/>
            <person name="Noguchi H."/>
            <person name="Totoki Y."/>
            <person name="Toyoda A."/>
            <person name="Kuroki Y."/>
            <person name="Dewar K."/>
            <person name="Lloyd C."/>
            <person name="Itoh T."/>
            <person name="Takeda T."/>
            <person name="Kim D.-W."/>
            <person name="She X."/>
            <person name="Barlow K.F."/>
            <person name="Bloom T."/>
            <person name="Bruford E."/>
            <person name="Chang J.L."/>
            <person name="Cuomo C.A."/>
            <person name="Eichler E."/>
            <person name="FitzGerald M.G."/>
            <person name="Jaffe D.B."/>
            <person name="LaButti K."/>
            <person name="Nicol R."/>
            <person name="Park H.-S."/>
            <person name="Seaman C."/>
            <person name="Sougnez C."/>
            <person name="Yang X."/>
            <person name="Zimmer A.R."/>
            <person name="Zody M.C."/>
            <person name="Birren B.W."/>
            <person name="Nusbaum C."/>
            <person name="Fujiyama A."/>
            <person name="Hattori M."/>
            <person name="Rogers J."/>
            <person name="Lander E.S."/>
            <person name="Sakaki Y."/>
        </authorList>
    </citation>
    <scope>NUCLEOTIDE SEQUENCE [LARGE SCALE GENOMIC DNA]</scope>
</reference>
<reference key="5">
    <citation type="journal article" date="2004" name="Genome Res.">
        <title>The status, quality, and expansion of the NIH full-length cDNA project: the Mammalian Gene Collection (MGC).</title>
        <authorList>
            <consortium name="The MGC Project Team"/>
        </authorList>
    </citation>
    <scope>NUCLEOTIDE SEQUENCE [LARGE SCALE MRNA] (ISOFORM 2A)</scope>
</reference>
<evidence type="ECO:0000250" key="1">
    <source>
        <dbReference type="UniProtKB" id="E9PUN2"/>
    </source>
</evidence>
<evidence type="ECO:0000250" key="2">
    <source>
        <dbReference type="UniProtKB" id="E9Q7X7"/>
    </source>
</evidence>
<evidence type="ECO:0000250" key="3">
    <source>
        <dbReference type="UniProtKB" id="Q28146"/>
    </source>
</evidence>
<evidence type="ECO:0000250" key="4">
    <source>
        <dbReference type="UniProtKB" id="Q63374"/>
    </source>
</evidence>
<evidence type="ECO:0000250" key="5">
    <source>
        <dbReference type="UniProtKB" id="Q63376"/>
    </source>
</evidence>
<evidence type="ECO:0000250" key="6">
    <source>
        <dbReference type="UniProtKB" id="Q9CS84"/>
    </source>
</evidence>
<evidence type="ECO:0000255" key="7"/>
<evidence type="ECO:0000255" key="8">
    <source>
        <dbReference type="PROSITE-ProRule" id="PRU00076"/>
    </source>
</evidence>
<evidence type="ECO:0000255" key="9">
    <source>
        <dbReference type="PROSITE-ProRule" id="PRU00122"/>
    </source>
</evidence>
<evidence type="ECO:0000256" key="10">
    <source>
        <dbReference type="SAM" id="MobiDB-lite"/>
    </source>
</evidence>
<evidence type="ECO:0000303" key="11">
    <source>
    </source>
</evidence>
<evidence type="ECO:0000303" key="12">
    <source>
    </source>
</evidence>
<evidence type="ECO:0000305" key="13"/>
<proteinExistence type="evidence at protein level"/>
<protein>
    <recommendedName>
        <fullName>Neurexin-2</fullName>
    </recommendedName>
    <alternativeName>
        <fullName>Neurexin II-alpha</fullName>
    </alternativeName>
    <alternativeName>
        <fullName>Neurexin-2-alpha</fullName>
    </alternativeName>
</protein>
<dbReference type="EMBL" id="AB035266">
    <property type="protein sequence ID" value="BAA94075.1"/>
    <property type="molecule type" value="mRNA"/>
</dbReference>
<dbReference type="EMBL" id="AB023138">
    <property type="protein sequence ID" value="BAA76765.2"/>
    <property type="status" value="ALT_INIT"/>
    <property type="molecule type" value="mRNA"/>
</dbReference>
<dbReference type="EMBL" id="AC044790">
    <property type="protein sequence ID" value="AAK68154.1"/>
    <property type="molecule type" value="Genomic_DNA"/>
</dbReference>
<dbReference type="EMBL" id="BC150275">
    <property type="protein sequence ID" value="AAI50276.1"/>
    <property type="molecule type" value="mRNA"/>
</dbReference>
<dbReference type="CCDS" id="CCDS31597.1">
    <molecule id="Q9P2S2-2"/>
</dbReference>
<dbReference type="CCDS" id="CCDS8077.1">
    <molecule id="Q9P2S2-1"/>
</dbReference>
<dbReference type="RefSeq" id="NP_055895.1">
    <molecule id="Q9P2S2-1"/>
    <property type="nucleotide sequence ID" value="NM_015080.4"/>
</dbReference>
<dbReference type="RefSeq" id="NP_620060.1">
    <molecule id="Q9P2S2-2"/>
    <property type="nucleotide sequence ID" value="NM_138732.3"/>
</dbReference>
<dbReference type="SMR" id="Q9P2S2"/>
<dbReference type="BioGRID" id="114780">
    <property type="interactions" value="9"/>
</dbReference>
<dbReference type="FunCoup" id="Q9P2S2">
    <property type="interactions" value="1086"/>
</dbReference>
<dbReference type="IntAct" id="Q9P2S2">
    <property type="interactions" value="5"/>
</dbReference>
<dbReference type="MINT" id="Q9P2S2"/>
<dbReference type="STRING" id="9606.ENSP00000265459"/>
<dbReference type="GlyCosmos" id="Q9P2S2">
    <property type="glycosylation" value="5 sites, 2 glycans"/>
</dbReference>
<dbReference type="GlyGen" id="Q9P2S2">
    <property type="glycosylation" value="9 sites, 3 O-linked glycans (2 sites)"/>
</dbReference>
<dbReference type="iPTMnet" id="Q9P2S2"/>
<dbReference type="PhosphoSitePlus" id="Q9P2S2"/>
<dbReference type="BioMuta" id="NRXN2"/>
<dbReference type="DMDM" id="17369343"/>
<dbReference type="jPOST" id="Q9P2S2"/>
<dbReference type="MassIVE" id="Q9P2S2"/>
<dbReference type="PaxDb" id="9606-ENSP00000265459"/>
<dbReference type="ProteomicsDB" id="83887">
    <molecule id="Q9P2S2-1"/>
</dbReference>
<dbReference type="ProteomicsDB" id="83888">
    <molecule id="Q9P2S2-2"/>
</dbReference>
<dbReference type="Antibodypedia" id="63686">
    <property type="antibodies" value="43 antibodies from 7 providers"/>
</dbReference>
<dbReference type="DNASU" id="9379"/>
<dbReference type="Ensembl" id="ENST00000265459.11">
    <molecule id="Q9P2S2-1"/>
    <property type="protein sequence ID" value="ENSP00000265459.5"/>
    <property type="gene ID" value="ENSG00000110076.21"/>
</dbReference>
<dbReference type="Ensembl" id="ENST00000377559.7">
    <molecule id="Q9P2S2-2"/>
    <property type="protein sequence ID" value="ENSP00000366782.3"/>
    <property type="gene ID" value="ENSG00000110076.21"/>
</dbReference>
<dbReference type="GeneID" id="9379"/>
<dbReference type="KEGG" id="hsa:9379"/>
<dbReference type="MANE-Select" id="ENST00000265459.11">
    <property type="protein sequence ID" value="ENSP00000265459.5"/>
    <property type="RefSeq nucleotide sequence ID" value="NM_015080.4"/>
    <property type="RefSeq protein sequence ID" value="NP_055895.1"/>
</dbReference>
<dbReference type="UCSC" id="uc021qkw.2">
    <molecule id="Q9P2S2-1"/>
    <property type="organism name" value="human"/>
</dbReference>
<dbReference type="AGR" id="HGNC:8009"/>
<dbReference type="CTD" id="9379"/>
<dbReference type="DisGeNET" id="9379"/>
<dbReference type="GeneCards" id="NRXN2"/>
<dbReference type="HGNC" id="HGNC:8009">
    <property type="gene designation" value="NRXN2"/>
</dbReference>
<dbReference type="HPA" id="ENSG00000110076">
    <property type="expression patterns" value="Tissue enriched (brain)"/>
</dbReference>
<dbReference type="MalaCards" id="NRXN2"/>
<dbReference type="MIM" id="600566">
    <property type="type" value="gene"/>
</dbReference>
<dbReference type="neXtProt" id="NX_Q9P2S2"/>
<dbReference type="OpenTargets" id="ENSG00000110076"/>
<dbReference type="PharmGKB" id="PA31787"/>
<dbReference type="VEuPathDB" id="HostDB:ENSG00000110076"/>
<dbReference type="eggNOG" id="KOG3514">
    <property type="taxonomic scope" value="Eukaryota"/>
</dbReference>
<dbReference type="GeneTree" id="ENSGT00940000155978"/>
<dbReference type="HOGENOM" id="CLU_001710_1_0_1"/>
<dbReference type="InParanoid" id="Q9P2S2"/>
<dbReference type="OMA" id="XHAGIGH"/>
<dbReference type="OrthoDB" id="5989513at2759"/>
<dbReference type="PAN-GO" id="Q9P2S2">
    <property type="GO annotations" value="0 GO annotations based on evolutionary models"/>
</dbReference>
<dbReference type="PhylomeDB" id="Q9P2S2"/>
<dbReference type="TreeFam" id="TF321302"/>
<dbReference type="PathwayCommons" id="Q9P2S2"/>
<dbReference type="Reactome" id="R-HSA-6794361">
    <property type="pathway name" value="Neurexins and neuroligins"/>
</dbReference>
<dbReference type="SignaLink" id="Q9P2S2"/>
<dbReference type="SIGNOR" id="Q9P2S2"/>
<dbReference type="BioGRID-ORCS" id="9379">
    <property type="hits" value="16 hits in 1149 CRISPR screens"/>
</dbReference>
<dbReference type="ChiTaRS" id="NRXN2">
    <property type="organism name" value="human"/>
</dbReference>
<dbReference type="GenomeRNAi" id="9379"/>
<dbReference type="Pharos" id="Q9P2S2">
    <property type="development level" value="Tbio"/>
</dbReference>
<dbReference type="Proteomes" id="UP000005640">
    <property type="component" value="Chromosome 11"/>
</dbReference>
<dbReference type="RNAct" id="Q9P2S2">
    <property type="molecule type" value="protein"/>
</dbReference>
<dbReference type="Bgee" id="ENSG00000110076">
    <property type="expression patterns" value="Expressed in right hemisphere of cerebellum and 139 other cell types or tissues"/>
</dbReference>
<dbReference type="ExpressionAtlas" id="Q9P2S2">
    <property type="expression patterns" value="baseline and differential"/>
</dbReference>
<dbReference type="GO" id="GO:0042995">
    <property type="term" value="C:cell projection"/>
    <property type="evidence" value="ECO:0007669"/>
    <property type="project" value="UniProtKB-KW"/>
</dbReference>
<dbReference type="GO" id="GO:0098978">
    <property type="term" value="C:glutamatergic synapse"/>
    <property type="evidence" value="ECO:0007669"/>
    <property type="project" value="Ensembl"/>
</dbReference>
<dbReference type="GO" id="GO:0005886">
    <property type="term" value="C:plasma membrane"/>
    <property type="evidence" value="ECO:0000304"/>
    <property type="project" value="Reactome"/>
</dbReference>
<dbReference type="GO" id="GO:0042734">
    <property type="term" value="C:presynaptic membrane"/>
    <property type="evidence" value="ECO:0007669"/>
    <property type="project" value="UniProtKB-SubCell"/>
</dbReference>
<dbReference type="GO" id="GO:0032991">
    <property type="term" value="C:protein-containing complex"/>
    <property type="evidence" value="ECO:0007669"/>
    <property type="project" value="Ensembl"/>
</dbReference>
<dbReference type="GO" id="GO:0005246">
    <property type="term" value="F:calcium channel regulator activity"/>
    <property type="evidence" value="ECO:0000250"/>
    <property type="project" value="BHF-UCL"/>
</dbReference>
<dbReference type="GO" id="GO:0050839">
    <property type="term" value="F:cell adhesion molecule binding"/>
    <property type="evidence" value="ECO:0000250"/>
    <property type="project" value="BHF-UCL"/>
</dbReference>
<dbReference type="GO" id="GO:0046872">
    <property type="term" value="F:metal ion binding"/>
    <property type="evidence" value="ECO:0007669"/>
    <property type="project" value="UniProtKB-KW"/>
</dbReference>
<dbReference type="GO" id="GO:0097109">
    <property type="term" value="F:neuroligin family protein binding"/>
    <property type="evidence" value="ECO:0000250"/>
    <property type="project" value="BHF-UCL"/>
</dbReference>
<dbReference type="GO" id="GO:0004888">
    <property type="term" value="F:transmembrane signaling receptor activity"/>
    <property type="evidence" value="ECO:0000250"/>
    <property type="project" value="BHF-UCL"/>
</dbReference>
<dbReference type="GO" id="GO:0030534">
    <property type="term" value="P:adult behavior"/>
    <property type="evidence" value="ECO:0000315"/>
    <property type="project" value="BHF-UCL"/>
</dbReference>
<dbReference type="GO" id="GO:0007268">
    <property type="term" value="P:chemical synaptic transmission"/>
    <property type="evidence" value="ECO:0000250"/>
    <property type="project" value="BHF-UCL"/>
</dbReference>
<dbReference type="GO" id="GO:0097116">
    <property type="term" value="P:gephyrin clustering involved in postsynaptic density assembly"/>
    <property type="evidence" value="ECO:0000250"/>
    <property type="project" value="BHF-UCL"/>
</dbReference>
<dbReference type="GO" id="GO:0097118">
    <property type="term" value="P:neuroligin clustering involved in postsynaptic membrane assembly"/>
    <property type="evidence" value="ECO:0000250"/>
    <property type="project" value="BHF-UCL"/>
</dbReference>
<dbReference type="GO" id="GO:0007158">
    <property type="term" value="P:neuron cell-cell adhesion"/>
    <property type="evidence" value="ECO:0000304"/>
    <property type="project" value="BHF-UCL"/>
</dbReference>
<dbReference type="GO" id="GO:0007269">
    <property type="term" value="P:neurotransmitter secretion"/>
    <property type="evidence" value="ECO:0000250"/>
    <property type="project" value="BHF-UCL"/>
</dbReference>
<dbReference type="GO" id="GO:0097119">
    <property type="term" value="P:postsynaptic density protein 95 clustering"/>
    <property type="evidence" value="ECO:0000250"/>
    <property type="project" value="BHF-UCL"/>
</dbReference>
<dbReference type="GO" id="GO:0097104">
    <property type="term" value="P:postsynaptic membrane assembly"/>
    <property type="evidence" value="ECO:0000250"/>
    <property type="project" value="BHF-UCL"/>
</dbReference>
<dbReference type="GO" id="GO:0099171">
    <property type="term" value="P:presynaptic modulation of chemical synaptic transmission"/>
    <property type="evidence" value="ECO:0007669"/>
    <property type="project" value="Ensembl"/>
</dbReference>
<dbReference type="GO" id="GO:0150052">
    <property type="term" value="P:regulation of postsynapse assembly"/>
    <property type="evidence" value="ECO:0007669"/>
    <property type="project" value="Ensembl"/>
</dbReference>
<dbReference type="GO" id="GO:0007165">
    <property type="term" value="P:signal transduction"/>
    <property type="evidence" value="ECO:0000250"/>
    <property type="project" value="BHF-UCL"/>
</dbReference>
<dbReference type="GO" id="GO:0035176">
    <property type="term" value="P:social behavior"/>
    <property type="evidence" value="ECO:0000315"/>
    <property type="project" value="BHF-UCL"/>
</dbReference>
<dbReference type="GO" id="GO:0007416">
    <property type="term" value="P:synapse assembly"/>
    <property type="evidence" value="ECO:0000250"/>
    <property type="project" value="BHF-UCL"/>
</dbReference>
<dbReference type="GO" id="GO:0042297">
    <property type="term" value="P:vocal learning"/>
    <property type="evidence" value="ECO:0000315"/>
    <property type="project" value="BHF-UCL"/>
</dbReference>
<dbReference type="GO" id="GO:0071625">
    <property type="term" value="P:vocalization behavior"/>
    <property type="evidence" value="ECO:0000315"/>
    <property type="project" value="BHF-UCL"/>
</dbReference>
<dbReference type="CDD" id="cd00054">
    <property type="entry name" value="EGF_CA"/>
    <property type="match status" value="1"/>
</dbReference>
<dbReference type="CDD" id="cd00110">
    <property type="entry name" value="LamG"/>
    <property type="match status" value="6"/>
</dbReference>
<dbReference type="FunFam" id="2.10.25.10:FF:000015">
    <property type="entry name" value="neurexin-1 isoform X1"/>
    <property type="match status" value="1"/>
</dbReference>
<dbReference type="FunFam" id="2.10.25.10:FF:000029">
    <property type="entry name" value="neurexin-1 isoform X1"/>
    <property type="match status" value="1"/>
</dbReference>
<dbReference type="FunFam" id="2.60.120.200:FF:000001">
    <property type="entry name" value="neurexin-1 isoform X1"/>
    <property type="match status" value="1"/>
</dbReference>
<dbReference type="FunFam" id="2.60.120.200:FF:000003">
    <property type="entry name" value="neurexin-1 isoform X1"/>
    <property type="match status" value="1"/>
</dbReference>
<dbReference type="FunFam" id="2.60.120.200:FF:000004">
    <property type="entry name" value="neurexin-1 isoform X1"/>
    <property type="match status" value="1"/>
</dbReference>
<dbReference type="FunFam" id="2.60.120.200:FF:000005">
    <property type="entry name" value="neurexin-1 isoform X1"/>
    <property type="match status" value="1"/>
</dbReference>
<dbReference type="FunFam" id="2.60.120.200:FF:000007">
    <property type="entry name" value="neurexin-1 isoform X1"/>
    <property type="match status" value="1"/>
</dbReference>
<dbReference type="FunFam" id="2.60.120.200:FF:000014">
    <property type="entry name" value="neurexin-1 isoform X1"/>
    <property type="match status" value="1"/>
</dbReference>
<dbReference type="FunFam" id="2.10.25.10:FF:000137">
    <property type="entry name" value="neurexin-2-beta isoform X1"/>
    <property type="match status" value="1"/>
</dbReference>
<dbReference type="Gene3D" id="2.60.120.200">
    <property type="match status" value="6"/>
</dbReference>
<dbReference type="Gene3D" id="2.10.25.10">
    <property type="entry name" value="Laminin"/>
    <property type="match status" value="3"/>
</dbReference>
<dbReference type="InterPro" id="IPR013320">
    <property type="entry name" value="ConA-like_dom_sf"/>
</dbReference>
<dbReference type="InterPro" id="IPR000742">
    <property type="entry name" value="EGF-like_dom"/>
</dbReference>
<dbReference type="InterPro" id="IPR001791">
    <property type="entry name" value="Laminin_G"/>
</dbReference>
<dbReference type="InterPro" id="IPR003585">
    <property type="entry name" value="Neurexin-like"/>
</dbReference>
<dbReference type="InterPro" id="IPR050372">
    <property type="entry name" value="Neurexin-related_CASP"/>
</dbReference>
<dbReference type="PANTHER" id="PTHR15036:SF49">
    <property type="entry name" value="AXOTACTIN"/>
    <property type="match status" value="1"/>
</dbReference>
<dbReference type="PANTHER" id="PTHR15036">
    <property type="entry name" value="PIKACHURIN-LIKE PROTEIN"/>
    <property type="match status" value="1"/>
</dbReference>
<dbReference type="Pfam" id="PF02210">
    <property type="entry name" value="Laminin_G_2"/>
    <property type="match status" value="6"/>
</dbReference>
<dbReference type="SMART" id="SM00294">
    <property type="entry name" value="4.1m"/>
    <property type="match status" value="1"/>
</dbReference>
<dbReference type="SMART" id="SM00181">
    <property type="entry name" value="EGF"/>
    <property type="match status" value="3"/>
</dbReference>
<dbReference type="SMART" id="SM00282">
    <property type="entry name" value="LamG"/>
    <property type="match status" value="6"/>
</dbReference>
<dbReference type="SUPFAM" id="SSF49899">
    <property type="entry name" value="Concanavalin A-like lectins/glucanases"/>
    <property type="match status" value="6"/>
</dbReference>
<dbReference type="PROSITE" id="PS50026">
    <property type="entry name" value="EGF_3"/>
    <property type="match status" value="3"/>
</dbReference>
<dbReference type="PROSITE" id="PS50025">
    <property type="entry name" value="LAM_G_DOMAIN"/>
    <property type="match status" value="6"/>
</dbReference>
<keyword id="KW-0877">Alternative promoter usage</keyword>
<keyword id="KW-0025">Alternative splicing</keyword>
<keyword id="KW-0106">Calcium</keyword>
<keyword id="KW-0130">Cell adhesion</keyword>
<keyword id="KW-1003">Cell membrane</keyword>
<keyword id="KW-0966">Cell projection</keyword>
<keyword id="KW-1015">Disulfide bond</keyword>
<keyword id="KW-0245">EGF-like domain</keyword>
<keyword id="KW-0325">Glycoprotein</keyword>
<keyword id="KW-0357">Heparan sulfate</keyword>
<keyword id="KW-0472">Membrane</keyword>
<keyword id="KW-0479">Metal-binding</keyword>
<keyword id="KW-0654">Proteoglycan</keyword>
<keyword id="KW-1267">Proteomics identification</keyword>
<keyword id="KW-1185">Reference proteome</keyword>
<keyword id="KW-0677">Repeat</keyword>
<keyword id="KW-0732">Signal</keyword>
<keyword id="KW-0770">Synapse</keyword>
<keyword id="KW-0812">Transmembrane</keyword>
<keyword id="KW-1133">Transmembrane helix</keyword>
<organism>
    <name type="scientific">Homo sapiens</name>
    <name type="common">Human</name>
    <dbReference type="NCBI Taxonomy" id="9606"/>
    <lineage>
        <taxon>Eukaryota</taxon>
        <taxon>Metazoa</taxon>
        <taxon>Chordata</taxon>
        <taxon>Craniata</taxon>
        <taxon>Vertebrata</taxon>
        <taxon>Euteleostomi</taxon>
        <taxon>Mammalia</taxon>
        <taxon>Eutheria</taxon>
        <taxon>Euarchontoglires</taxon>
        <taxon>Primates</taxon>
        <taxon>Haplorrhini</taxon>
        <taxon>Catarrhini</taxon>
        <taxon>Hominidae</taxon>
        <taxon>Homo</taxon>
    </lineage>
</organism>
<comment type="function">
    <text>Neuronal cell surface protein that may be involved in cell recognition and cell adhesion. May mediate intracellular signaling.</text>
</comment>
<comment type="subunit">
    <text evidence="2 4 5">The laminin G-like domain 1 binds to NXPH1. Interacts with PATJ (By similarity). Interacts with CBLN1, CBLN2 and, less avidly, with CBLN4 (By similarity). Specific isoforms bind neuroligins NLGN1, NLGN2 and NLGN3 (By similarity). Specific isoforms bind to alpha-dystroglycan (By similarity). Interacts (via Laminin G-like 1 domain) with IGSF21 (Ig-like 1 domain) in a trans-interaction manner (By similarity). Interacts with CLSTN3 (By similarity).</text>
</comment>
<comment type="subcellular location">
    <subcellularLocation>
        <location evidence="6">Presynaptic cell membrane</location>
        <topology evidence="7">Single-pass type I membrane protein</topology>
    </subcellularLocation>
</comment>
<comment type="alternative products">
    <event type="alternative promoter"/>
    <event type="alternative splicing"/>
    <isoform>
        <id>Q9P2S2-1</id>
        <name>1a</name>
        <sequence type="displayed"/>
    </isoform>
    <isoform>
        <id>Q9P2S2-2</id>
        <name>2a</name>
        <name>Alpha-2B</name>
        <sequence type="described" ref="VSP_003505 VSP_003506 VSP_003507 VSP_003508"/>
    </isoform>
    <isoform>
        <id>P58401-1</id>
        <name>1b</name>
        <sequence type="external"/>
    </isoform>
    <text>A number of isoforms, alpha-type and beta-type are produced by alternative promoter usage. Beta-type isoforms differ from alpha-type isoforms in their N-terminus. Additional isoforms produced by alternative splicing seem to exist.</text>
</comment>
<comment type="tissue specificity">
    <text>Predominantly expressed in brain.</text>
</comment>
<comment type="PTM">
    <text evidence="2">O-glycosylated; contains heparan sulfate. Heparan sulfate attachment is required for synapse development by mediating interactions with neuroligins.</text>
</comment>
<comment type="similarity">
    <text evidence="13">Belongs to the neurexin family.</text>
</comment>
<comment type="sequence caution" evidence="13">
    <conflict type="erroneous initiation">
        <sequence resource="EMBL-CDS" id="BAA76765"/>
    </conflict>
    <text>Extended N-terminus.</text>
</comment>
<gene>
    <name type="primary">NRXN2</name>
    <name type="synonym">KIAA0921</name>
</gene>